<feature type="chain" id="PRO_0000116066" description="DNA polymerase processivity factor">
    <location>
        <begin position="1"/>
        <end position="393"/>
    </location>
</feature>
<feature type="region of interest" description="Disordered" evidence="2">
    <location>
        <begin position="25"/>
        <end position="50"/>
    </location>
</feature>
<feature type="region of interest" description="Disordered" evidence="2">
    <location>
        <begin position="311"/>
        <end position="339"/>
    </location>
</feature>
<feature type="region of interest" description="Disordered" evidence="2">
    <location>
        <begin position="355"/>
        <end position="393"/>
    </location>
</feature>
<feature type="compositionally biased region" description="Basic residues" evidence="2">
    <location>
        <begin position="31"/>
        <end position="41"/>
    </location>
</feature>
<feature type="compositionally biased region" description="Basic and acidic residues" evidence="2">
    <location>
        <begin position="311"/>
        <end position="333"/>
    </location>
</feature>
<name>VPAP_HHV6U</name>
<evidence type="ECO:0000250" key="1"/>
<evidence type="ECO:0000256" key="2">
    <source>
        <dbReference type="SAM" id="MobiDB-lite"/>
    </source>
</evidence>
<evidence type="ECO:0000305" key="3"/>
<gene>
    <name type="primary">U27</name>
    <name type="synonym">EPLF1</name>
</gene>
<proteinExistence type="inferred from homology"/>
<accession>P52439</accession>
<accession>Q69052</accession>
<organism>
    <name type="scientific">Human herpesvirus 6A (strain Uganda-1102)</name>
    <name type="common">HHV-6 variant A</name>
    <name type="synonym">Human B lymphotropic virus</name>
    <dbReference type="NCBI Taxonomy" id="10370"/>
    <lineage>
        <taxon>Viruses</taxon>
        <taxon>Duplodnaviria</taxon>
        <taxon>Heunggongvirae</taxon>
        <taxon>Peploviricota</taxon>
        <taxon>Herviviricetes</taxon>
        <taxon>Herpesvirales</taxon>
        <taxon>Orthoherpesviridae</taxon>
        <taxon>Betaherpesvirinae</taxon>
        <taxon>Roseolovirus</taxon>
        <taxon>Roseolovirus humanbeta6a</taxon>
        <taxon>Human betaherpesvirus 6A</taxon>
    </lineage>
</organism>
<comment type="function">
    <text evidence="1">Accessory subunit of the DNA polymerase that acts to increase the processivity of polymerization.</text>
</comment>
<comment type="similarity">
    <text evidence="3">Belongs to the herpesviridae polymerase accessory protein family.</text>
</comment>
<comment type="sequence caution" evidence="3">
    <conflict type="erroneous initiation">
        <sequence resource="EMBL-CDS" id="AAA16735"/>
    </conflict>
    <text>Extended N-terminus.</text>
</comment>
<sequence length="393" mass="44810">MCWSFHLFFKAHKARVGARTSFLTEMERGSRDHHRDHRDHREHRETREPPTLAFHMKSWKTINKSLKAFAKLLKENTTVTFTPQPSIIIQSAKNHLVQKLTIQAECLFLSDTDRFLTKTINNHIPLFESFMNIISNPEVTKMYIQHDSDLYTRVLVTASDTCTQASVPCVHGQEVVRDTGRSPLRIDLDHSTVSDVLKWLSPVTKTKRSGKSDALMAHIIVQVNPPTIKFVTEMNELEFSNSNKVIFYDVKNMRFNLSAKNLQQALSMCAVIKTSCSLRTVAAKDCKLILTSKSTLLTVEAFLTQEQLKEESRFERMGKQDDGKGDRSHKNDDGSALASKQEMQYKITNYMVPAKNGTAGSSLFNEKEDSESDDSMHFDYSSNPNPKRQRCVV</sequence>
<organismHost>
    <name type="scientific">Homo sapiens</name>
    <name type="common">Human</name>
    <dbReference type="NCBI Taxonomy" id="9606"/>
</organismHost>
<dbReference type="EMBL" id="L25528">
    <property type="protein sequence ID" value="AAA16735.1"/>
    <property type="status" value="ALT_INIT"/>
    <property type="molecule type" value="Genomic_DNA"/>
</dbReference>
<dbReference type="EMBL" id="X83413">
    <property type="protein sequence ID" value="CAA58407.1"/>
    <property type="molecule type" value="Genomic_DNA"/>
</dbReference>
<dbReference type="PIR" id="T09322">
    <property type="entry name" value="T09322"/>
</dbReference>
<dbReference type="RefSeq" id="NP_042920.2">
    <property type="nucleotide sequence ID" value="NC_001664.2"/>
</dbReference>
<dbReference type="SMR" id="P52439"/>
<dbReference type="DNASU" id="1487904"/>
<dbReference type="GeneID" id="1487904"/>
<dbReference type="KEGG" id="vg:1487904"/>
<dbReference type="Proteomes" id="UP000009295">
    <property type="component" value="Segment"/>
</dbReference>
<dbReference type="GO" id="GO:0003677">
    <property type="term" value="F:DNA binding"/>
    <property type="evidence" value="ECO:0007669"/>
    <property type="project" value="UniProtKB-KW"/>
</dbReference>
<dbReference type="GO" id="GO:0030337">
    <property type="term" value="F:DNA polymerase processivity factor activity"/>
    <property type="evidence" value="ECO:0007669"/>
    <property type="project" value="InterPro"/>
</dbReference>
<dbReference type="GO" id="GO:0006260">
    <property type="term" value="P:DNA replication"/>
    <property type="evidence" value="ECO:0007669"/>
    <property type="project" value="UniProtKB-KW"/>
</dbReference>
<dbReference type="GO" id="GO:0019079">
    <property type="term" value="P:viral genome replication"/>
    <property type="evidence" value="ECO:0007669"/>
    <property type="project" value="InterPro"/>
</dbReference>
<dbReference type="Gene3D" id="3.70.10.10">
    <property type="match status" value="1"/>
</dbReference>
<dbReference type="InterPro" id="IPR046938">
    <property type="entry name" value="DNA_clamp_sf"/>
</dbReference>
<dbReference type="InterPro" id="IPR004997">
    <property type="entry name" value="Herpes_PAP"/>
</dbReference>
<dbReference type="Pfam" id="PF03325">
    <property type="entry name" value="Herpes_PAP"/>
    <property type="match status" value="1"/>
</dbReference>
<dbReference type="SUPFAM" id="SSF55979">
    <property type="entry name" value="DNA clamp"/>
    <property type="match status" value="2"/>
</dbReference>
<protein>
    <recommendedName>
        <fullName>DNA polymerase processivity factor</fullName>
    </recommendedName>
    <alternativeName>
        <fullName>Phosphoprotein P41</fullName>
        <shortName>PP41</shortName>
    </alternativeName>
    <alternativeName>
        <fullName>Polymerase accessory protein</fullName>
        <shortName>PAP</shortName>
    </alternativeName>
</protein>
<keyword id="KW-0235">DNA replication</keyword>
<keyword id="KW-0238">DNA-binding</keyword>
<keyword id="KW-0597">Phosphoprotein</keyword>
<keyword id="KW-1185">Reference proteome</keyword>
<reference key="1">
    <citation type="journal article" date="1994" name="J. Virol.">
        <title>Nucleotide sequence analysis of a 38.5-kilobase-pair region of the genome of human herpesvirus 6 encoding human cytomegalovirus immediate-early gene homologs and transactivating functions.</title>
        <authorList>
            <person name="Nicholas J."/>
            <person name="Martin M.E.D."/>
        </authorList>
    </citation>
    <scope>NUCLEOTIDE SEQUENCE [GENOMIC DNA]</scope>
</reference>
<reference key="2">
    <citation type="journal article" date="1995" name="Virology">
        <title>The DNA sequence of human herpesvirus-6: structure, coding content, and genome evolution.</title>
        <authorList>
            <person name="Gompels U.A."/>
            <person name="Nicholas J."/>
            <person name="Lawrence G.L."/>
            <person name="Jones M."/>
            <person name="Thomson B.J."/>
            <person name="Martin M.E.D."/>
            <person name="Efstathiou S."/>
            <person name="Craxton M.A."/>
            <person name="Macaulay H.A."/>
        </authorList>
    </citation>
    <scope>NUCLEOTIDE SEQUENCE [LARGE SCALE GENOMIC DNA]</scope>
</reference>